<evidence type="ECO:0000250" key="1">
    <source>
        <dbReference type="UniProtKB" id="P19836"/>
    </source>
</evidence>
<evidence type="ECO:0000250" key="2">
    <source>
        <dbReference type="UniProtKB" id="P49586"/>
    </source>
</evidence>
<evidence type="ECO:0000255" key="3"/>
<evidence type="ECO:0000256" key="4">
    <source>
        <dbReference type="SAM" id="MobiDB-lite"/>
    </source>
</evidence>
<evidence type="ECO:0000269" key="5">
    <source>
    </source>
</evidence>
<evidence type="ECO:0000269" key="6">
    <source>
    </source>
</evidence>
<evidence type="ECO:0000269" key="7">
    <source>
    </source>
</evidence>
<evidence type="ECO:0000269" key="8">
    <source>
    </source>
</evidence>
<evidence type="ECO:0000269" key="9">
    <source>
    </source>
</evidence>
<evidence type="ECO:0000269" key="10">
    <source>
    </source>
</evidence>
<evidence type="ECO:0000269" key="11">
    <source>
    </source>
</evidence>
<evidence type="ECO:0000269" key="12">
    <source>
    </source>
</evidence>
<evidence type="ECO:0000305" key="13"/>
<evidence type="ECO:0000305" key="14">
    <source>
    </source>
</evidence>
<evidence type="ECO:0007744" key="15">
    <source>
    </source>
</evidence>
<evidence type="ECO:0007744" key="16">
    <source>
    </source>
</evidence>
<evidence type="ECO:0007744" key="17">
    <source>
    </source>
</evidence>
<evidence type="ECO:0007744" key="18">
    <source>
    </source>
</evidence>
<evidence type="ECO:0007744" key="19">
    <source>
    </source>
</evidence>
<evidence type="ECO:0007744" key="20">
    <source>
    </source>
</evidence>
<evidence type="ECO:0007744" key="21">
    <source>
    </source>
</evidence>
<evidence type="ECO:0007744" key="22">
    <source>
    </source>
</evidence>
<evidence type="ECO:0007744" key="23">
    <source>
    </source>
</evidence>
<evidence type="ECO:0007744" key="24">
    <source>
    </source>
</evidence>
<accession>P49585</accession>
<accession>A9LYK9</accession>
<accession>D3DXB1</accession>
<accession>Q86Y88</accession>
<keyword id="KW-0007">Acetylation</keyword>
<keyword id="KW-0182">Cone-rod dystrophy</keyword>
<keyword id="KW-1022">Congenital generalized lipodystrophy</keyword>
<keyword id="KW-0963">Cytoplasm</keyword>
<keyword id="KW-0219">Diabetes mellitus</keyword>
<keyword id="KW-0225">Disease variant</keyword>
<keyword id="KW-0242">Dwarfism</keyword>
<keyword id="KW-0256">Endoplasmic reticulum</keyword>
<keyword id="KW-0444">Lipid biosynthesis</keyword>
<keyword id="KW-0443">Lipid metabolism</keyword>
<keyword id="KW-0472">Membrane</keyword>
<keyword id="KW-0548">Nucleotidyltransferase</keyword>
<keyword id="KW-0539">Nucleus</keyword>
<keyword id="KW-0594">Phospholipid biosynthesis</keyword>
<keyword id="KW-1208">Phospholipid metabolism</keyword>
<keyword id="KW-0597">Phosphoprotein</keyword>
<keyword id="KW-1267">Proteomics identification</keyword>
<keyword id="KW-1185">Reference proteome</keyword>
<keyword id="KW-0677">Repeat</keyword>
<keyword id="KW-0808">Transferase</keyword>
<keyword id="KW-0832">Ubl conjugation</keyword>
<feature type="chain" id="PRO_0000208453" description="Choline-phosphate cytidylyltransferase A">
    <location>
        <begin position="1"/>
        <end position="367"/>
    </location>
</feature>
<feature type="repeat" description="1">
    <location>
        <begin position="319"/>
        <end position="324"/>
    </location>
</feature>
<feature type="repeat" description="2; approximate">
    <location>
        <begin position="329"/>
        <end position="333"/>
    </location>
</feature>
<feature type="repeat" description="3">
    <location>
        <begin position="343"/>
        <end position="348"/>
    </location>
</feature>
<feature type="region of interest" description="Disordered" evidence="4">
    <location>
        <begin position="1"/>
        <end position="33"/>
    </location>
</feature>
<feature type="region of interest" description="Amphipathic" evidence="3">
    <location>
        <begin position="228"/>
        <end position="287"/>
    </location>
</feature>
<feature type="region of interest" description="Autoinhibitory (AI)" evidence="1">
    <location>
        <begin position="272"/>
        <end position="293"/>
    </location>
</feature>
<feature type="region of interest" description="Amphipathic" evidence="3">
    <location>
        <begin position="298"/>
        <end position="315"/>
    </location>
</feature>
<feature type="region of interest" description="Disordered" evidence="4">
    <location>
        <begin position="313"/>
        <end position="367"/>
    </location>
</feature>
<feature type="compositionally biased region" description="Low complexity" evidence="4">
    <location>
        <begin position="319"/>
        <end position="339"/>
    </location>
</feature>
<feature type="binding site" evidence="1">
    <location>
        <position position="84"/>
    </location>
    <ligand>
        <name>CTP</name>
        <dbReference type="ChEBI" id="CHEBI:37563"/>
    </ligand>
</feature>
<feature type="binding site" evidence="1">
    <location>
        <position position="85"/>
    </location>
    <ligand>
        <name>CTP</name>
        <dbReference type="ChEBI" id="CHEBI:37563"/>
    </ligand>
</feature>
<feature type="binding site" evidence="1">
    <location>
        <position position="92"/>
    </location>
    <ligand>
        <name>CTP</name>
        <dbReference type="ChEBI" id="CHEBI:37563"/>
    </ligand>
</feature>
<feature type="binding site" evidence="1">
    <location>
        <position position="122"/>
    </location>
    <ligand>
        <name>CTP</name>
        <dbReference type="ChEBI" id="CHEBI:37563"/>
    </ligand>
</feature>
<feature type="binding site" evidence="1">
    <location>
        <position position="122"/>
    </location>
    <ligand>
        <name>phosphocholine</name>
        <dbReference type="ChEBI" id="CHEBI:295975"/>
    </ligand>
</feature>
<feature type="binding site" evidence="1">
    <location>
        <position position="151"/>
    </location>
    <ligand>
        <name>phosphocholine</name>
        <dbReference type="ChEBI" id="CHEBI:295975"/>
    </ligand>
</feature>
<feature type="binding site" evidence="1">
    <location>
        <position position="168"/>
    </location>
    <ligand>
        <name>CTP</name>
        <dbReference type="ChEBI" id="CHEBI:37563"/>
    </ligand>
</feature>
<feature type="binding site" evidence="1">
    <location>
        <position position="169"/>
    </location>
    <ligand>
        <name>CTP</name>
        <dbReference type="ChEBI" id="CHEBI:37563"/>
    </ligand>
</feature>
<feature type="binding site" evidence="1">
    <location>
        <position position="173"/>
    </location>
    <ligand>
        <name>CTP</name>
        <dbReference type="ChEBI" id="CHEBI:37563"/>
    </ligand>
</feature>
<feature type="binding site" evidence="1">
    <location>
        <position position="195"/>
    </location>
    <ligand>
        <name>CTP</name>
        <dbReference type="ChEBI" id="CHEBI:37563"/>
    </ligand>
</feature>
<feature type="binding site" evidence="1">
    <location>
        <position position="196"/>
    </location>
    <ligand>
        <name>CTP</name>
        <dbReference type="ChEBI" id="CHEBI:37563"/>
    </ligand>
</feature>
<feature type="binding site" evidence="1">
    <location>
        <position position="197"/>
    </location>
    <ligand>
        <name>CTP</name>
        <dbReference type="ChEBI" id="CHEBI:37563"/>
    </ligand>
</feature>
<feature type="binding site" evidence="1">
    <location>
        <position position="200"/>
    </location>
    <ligand>
        <name>CTP</name>
        <dbReference type="ChEBI" id="CHEBI:37563"/>
    </ligand>
</feature>
<feature type="modified residue" description="N-acetylmethionine" evidence="22">
    <location>
        <position position="1"/>
    </location>
</feature>
<feature type="modified residue" description="N6-acetyllysine" evidence="18">
    <location>
        <position position="8"/>
    </location>
</feature>
<feature type="modified residue" description="Phosphoserine" evidence="23">
    <location>
        <position position="233"/>
    </location>
</feature>
<feature type="modified residue" description="Phosphoserine" evidence="19 23">
    <location>
        <position position="315"/>
    </location>
</feature>
<feature type="modified residue" description="Phosphoserine" evidence="19 23">
    <location>
        <position position="319"/>
    </location>
</feature>
<feature type="modified residue" description="Phosphoserine" evidence="1">
    <location>
        <position position="321"/>
    </location>
</feature>
<feature type="modified residue" description="Phosphoserine" evidence="1">
    <location>
        <position position="322"/>
    </location>
</feature>
<feature type="modified residue" description="Phosphoserine" evidence="2">
    <location>
        <position position="323"/>
    </location>
</feature>
<feature type="modified residue" description="Phosphothreonine" evidence="2">
    <location>
        <position position="325"/>
    </location>
</feature>
<feature type="modified residue" description="Phosphoserine" evidence="1">
    <location>
        <position position="329"/>
    </location>
</feature>
<feature type="modified residue" description="Phosphoserine" evidence="23">
    <location>
        <position position="331"/>
    </location>
</feature>
<feature type="modified residue" description="Phosphoserine" evidence="1">
    <location>
        <position position="333"/>
    </location>
</feature>
<feature type="modified residue" description="Phosphothreonine" evidence="23">
    <location>
        <position position="342"/>
    </location>
</feature>
<feature type="modified residue" description="Phosphoserine" evidence="17 19 23 24">
    <location>
        <position position="343"/>
    </location>
</feature>
<feature type="modified residue" description="Phosphoserine" evidence="17 19 23 24">
    <location>
        <position position="347"/>
    </location>
</feature>
<feature type="modified residue" description="Phosphoserine" evidence="17">
    <location>
        <position position="352"/>
    </location>
</feature>
<feature type="modified residue" description="Phosphoserine" evidence="15 16 17 19 20 21 24">
    <location>
        <position position="362"/>
    </location>
</feature>
<feature type="sequence variant" id="VAR_071083" description="In SMDCRD; no effect on solubility; decreased lipid vesicle-dependent choline-phosphate cytidylyltransferase activity; 4-fold decreased Vmax; 2.5-fold decreased affinity for phosphocholine; 4-fold decreased affinity for CTP; dbSNP:rs587777191." evidence="7 10">
    <original>A</original>
    <variation>T</variation>
    <location>
        <position position="99"/>
    </location>
</feature>
<feature type="sequence variant" id="VAR_071084" description="In SMDCRD; decreased solubility; decreased lipid vesicle-dependent choline-phosphate cytidylyltransferase activity; 2-fold decreased Vmax; 3.5-fold decreased affinity for phosphocholine; 5-fold decreased affinity for CTP; dbSNP:rs587777189." evidence="7 10">
    <original>A</original>
    <variation>V</variation>
    <location>
        <position position="99"/>
    </location>
</feature>
<feature type="sequence variant" id="VAR_071085" description="In SMDCRD; decreased solubility; no significant effect on lipid vesicle-dependent choline-phosphate cytidylyltransferase activity; 3.5-fold decreased affinity for phosphocholine; 3-fold decreased affinity for CTP; dbSNP:rs587777194." evidence="7 8 10">
    <original>E</original>
    <variation>K</variation>
    <location>
        <position position="129"/>
    </location>
</feature>
<feature type="sequence variant" id="VAR_089225" description="In CGL5; likely pathogenic; loss of function in phosphatidylcholine synthesis shown in transfected cells; severely decreased solubility." evidence="9 10">
    <original>V</original>
    <variation>M</variation>
    <location>
        <position position="142"/>
    </location>
</feature>
<feature type="sequence variant" id="VAR_071086" description="In SMDCRD; decreased function in phosphatidylcholine synthesis shown in transfected cells; severely decreased solubility; dbSNP:rs587777190." evidence="7 10">
    <original>P</original>
    <variation>A</variation>
    <location>
        <position position="150"/>
    </location>
</feature>
<feature type="sequence variant" id="VAR_071087" description="In SMDCRD; decreased solubility; dbSNP:rs587777195." evidence="7 10">
    <original>F</original>
    <variation>L</variation>
    <location>
        <position position="191"/>
    </location>
</feature>
<feature type="sequence variant" id="VAR_071088" description="In SMDCRD; no effect on solubility; decreased lipid vesicle-dependent choline-phosphate cytidylyltransferase activity; 4-fold decreased Vmax; 3.5-fold decreased affinity for phosphocholine; 3-fold decreased affinity for CTP; dbSNP:rs540053239." evidence="7 10">
    <original>R</original>
    <variation>S</variation>
    <location>
        <position position="223"/>
    </location>
</feature>
<feature type="sequence variant" id="VAR_089226" description="In CGL5; likely pathogenic; increased protein degradation in patient cells; decreased function in phosphatidylcholine synthesis shown in transfected cells; decreased solubility." evidence="9 10">
    <location>
        <position position="280"/>
    </location>
</feature>
<feature type="mutagenesis site" description="Abolishes formation of the interchain disulfide that can be observed when the enzyme is treated with copper phenanthrolene (in vitro)." evidence="6">
    <original>C</original>
    <variation>S</variation>
    <location>
        <position position="37"/>
    </location>
</feature>
<feature type="mutagenesis site" description="Decreased solubility. Decreased lipid vesicle-dependent choline-phosphate cytidylyltransferase activity. 4-fold decreased Vmax. No effect on affinity for phosphocholine and CTP." evidence="10">
    <original>A</original>
    <variation>T</variation>
    <location>
        <position position="93"/>
    </location>
</feature>
<feature type="mutagenesis site" description="Decreased solubility." evidence="10">
    <original>Y</original>
    <variation>H</variation>
    <location>
        <position position="240"/>
    </location>
</feature>
<feature type="sequence conflict" description="In Ref. 1; AAA72127." evidence="13" ref="1">
    <original>K</original>
    <variation>E</variation>
    <location>
        <position position="251"/>
    </location>
</feature>
<gene>
    <name type="primary">PCYT1A</name>
    <name type="synonym">CTPCT</name>
    <name type="synonym">PCYT1</name>
</gene>
<protein>
    <recommendedName>
        <fullName>Choline-phosphate cytidylyltransferase A</fullName>
        <ecNumber evidence="5 10 11">2.7.7.15</ecNumber>
    </recommendedName>
    <alternativeName>
        <fullName>CCT-alpha</fullName>
    </alternativeName>
    <alternativeName>
        <fullName>CTP:phosphocholine cytidylyltransferase A</fullName>
        <shortName>CCT A</shortName>
        <shortName>CT A</shortName>
    </alternativeName>
    <alternativeName>
        <fullName>Phosphorylcholine transferase A</fullName>
    </alternativeName>
</protein>
<sequence>MDAQCSAKVNARKRRKEAPGPNGATEEDGVPSKVQRCAVGLRQPAPFSDEIEVDFSKPYVRVTMEEASRGTPCERPVRVYADGIFDLFHSGHARALMQAKNLFPNTYLIVGVCSDELTHNFKGFTVMNENERYDAVQHCRYVDEVVRNAPWTLTPEFLAEHRIDFVAHDDIPYSSAGSDDVYKHIKEAGMFAPTQRTEGISTSDIITRIVRDYDVYARRNLQRGYTAKELNVSFINEKKYHLQERVDKVKKKVKDVEEKSKEFVQKVEEKSIDLIQKWEEKSREFIGSFLEMFGPEGALKHMLKEGKGRMLQAISPKQSPSSSPTRERSPSPSFRWPFSGKTSPPCSPANLSRHKAAAYDISEDEED</sequence>
<comment type="function">
    <text evidence="5 10 11">Catalyzes the key rate-limiting step in the CDP-choline pathway for phosphatidylcholine biosynthesis.</text>
</comment>
<comment type="catalytic activity">
    <reaction evidence="5 10 11">
        <text>phosphocholine + CTP + H(+) = CDP-choline + diphosphate</text>
        <dbReference type="Rhea" id="RHEA:18997"/>
        <dbReference type="ChEBI" id="CHEBI:15378"/>
        <dbReference type="ChEBI" id="CHEBI:33019"/>
        <dbReference type="ChEBI" id="CHEBI:37563"/>
        <dbReference type="ChEBI" id="CHEBI:58779"/>
        <dbReference type="ChEBI" id="CHEBI:295975"/>
        <dbReference type="EC" id="2.7.7.15"/>
    </reaction>
    <physiologicalReaction direction="left-to-right" evidence="10 14">
        <dbReference type="Rhea" id="RHEA:18998"/>
    </physiologicalReaction>
</comment>
<comment type="activity regulation">
    <text evidence="1 11 12">Interconverts between an inactive cytosolic form and an active membrane-bound form (By similarity). Activation involves disruption of an inhibitory interaction between helices at the base of the active site and the autoinhibitory (AI) region (By similarity). Activated by anionic lipid vesicles and by oleic acid or diacylglycerol-containing phosphatidylcholine vesicles (PubMed:7918629, PubMed:8155650).</text>
</comment>
<comment type="pathway">
    <text evidence="5 11">Phospholipid metabolism; phosphatidylcholine biosynthesis; phosphatidylcholine from phosphocholine: step 1/2.</text>
</comment>
<comment type="subunit">
    <text evidence="1">Homodimer.</text>
</comment>
<comment type="interaction">
    <interactant intactId="EBI-2563309">
        <id>P49585</id>
    </interactant>
    <interactant intactId="EBI-11522760">
        <id>Q6RW13-2</id>
        <label>AGTRAP</label>
    </interactant>
    <organismsDiffer>false</organismsDiffer>
    <experiments>3</experiments>
</comment>
<comment type="interaction">
    <interactant intactId="EBI-2563309">
        <id>P49585</id>
    </interactant>
    <interactant intactId="EBI-3918971">
        <id>Q9Y680</id>
        <label>FKBP7</label>
    </interactant>
    <organismsDiffer>false</organismsDiffer>
    <experiments>3</experiments>
</comment>
<comment type="interaction">
    <interactant intactId="EBI-2563309">
        <id>P49585</id>
    </interactant>
    <interactant intactId="EBI-740553">
        <id>P13807</id>
        <label>GYS1</label>
    </interactant>
    <organismsDiffer>false</organismsDiffer>
    <experiments>3</experiments>
</comment>
<comment type="interaction">
    <interactant intactId="EBI-2563309">
        <id>P49585</id>
    </interactant>
    <interactant intactId="EBI-5651459">
        <id>P43357</id>
        <label>MAGEA3</label>
    </interactant>
    <organismsDiffer>false</organismsDiffer>
    <experiments>3</experiments>
</comment>
<comment type="interaction">
    <interactant intactId="EBI-2563309">
        <id>P49585</id>
    </interactant>
    <interactant intactId="EBI-748229">
        <id>Q9H8S9</id>
        <label>MOB1A</label>
    </interactant>
    <organismsDiffer>false</organismsDiffer>
    <experiments>3</experiments>
</comment>
<comment type="interaction">
    <interactant intactId="EBI-2563309">
        <id>P49585</id>
    </interactant>
    <interactant intactId="EBI-9679267">
        <id>Q70IA8</id>
        <label>MOB3C</label>
    </interactant>
    <organismsDiffer>false</organismsDiffer>
    <experiments>3</experiments>
</comment>
<comment type="interaction">
    <interactant intactId="EBI-2563309">
        <id>P49585</id>
    </interactant>
    <interactant intactId="EBI-3917542">
        <id>Q9HAN9</id>
        <label>NMNAT1</label>
    </interactant>
    <organismsDiffer>false</organismsDiffer>
    <experiments>3</experiments>
</comment>
<comment type="interaction">
    <interactant intactId="EBI-2563309">
        <id>P49585</id>
    </interactant>
    <interactant intactId="EBI-2563309">
        <id>P49585</id>
        <label>PCYT1A</label>
    </interactant>
    <organismsDiffer>false</organismsDiffer>
    <experiments>5</experiments>
</comment>
<comment type="interaction">
    <interactant intactId="EBI-2563309">
        <id>P49585</id>
    </interactant>
    <interactant intactId="EBI-12280028">
        <id>Q9Y5K3-3</id>
        <label>PCYT1B</label>
    </interactant>
    <organismsDiffer>false</organismsDiffer>
    <experiments>6</experiments>
</comment>
<comment type="interaction">
    <interactant intactId="EBI-2563309">
        <id>P49585</id>
    </interactant>
    <interactant intactId="EBI-373337">
        <id>O76064</id>
        <label>RNF8</label>
    </interactant>
    <organismsDiffer>false</organismsDiffer>
    <experiments>3</experiments>
</comment>
<comment type="interaction">
    <interactant intactId="EBI-2563309">
        <id>P49585</id>
    </interactant>
    <interactant intactId="EBI-954338">
        <id>O15126</id>
        <label>SCAMP1</label>
    </interactant>
    <organismsDiffer>false</organismsDiffer>
    <experiments>3</experiments>
</comment>
<comment type="interaction">
    <interactant intactId="EBI-2563309">
        <id>P49585</id>
    </interactant>
    <interactant intactId="EBI-727004">
        <id>O00560</id>
        <label>SDCBP</label>
    </interactant>
    <organismsDiffer>false</organismsDiffer>
    <experiments>3</experiments>
</comment>
<comment type="interaction">
    <interactant intactId="EBI-2563309">
        <id>P49585</id>
    </interactant>
    <interactant intactId="EBI-296723">
        <id>O95295</id>
        <label>SNAPIN</label>
    </interactant>
    <organismsDiffer>false</organismsDiffer>
    <experiments>3</experiments>
</comment>
<comment type="interaction">
    <interactant intactId="EBI-2563309">
        <id>P49585</id>
    </interactant>
    <interactant intactId="EBI-1044859">
        <id>Q9UBN6</id>
        <label>TNFRSF10D</label>
    </interactant>
    <organismsDiffer>false</organismsDiffer>
    <experiments>3</experiments>
</comment>
<comment type="interaction">
    <interactant intactId="EBI-2563309">
        <id>P49585</id>
    </interactant>
    <interactant intactId="EBI-11337915">
        <id>Q8N0U8</id>
        <label>VKORC1L1</label>
    </interactant>
    <organismsDiffer>false</organismsDiffer>
    <experiments>4</experiments>
</comment>
<comment type="subcellular location">
    <subcellularLocation>
        <location evidence="1">Cytoplasm</location>
        <location evidence="1">Cytosol</location>
    </subcellularLocation>
    <subcellularLocation>
        <location evidence="1">Membrane</location>
        <topology evidence="1">Peripheral membrane protein</topology>
    </subcellularLocation>
    <subcellularLocation>
        <location evidence="5">Endoplasmic reticulum membrane</location>
        <topology evidence="1">Peripheral membrane protein</topology>
    </subcellularLocation>
    <subcellularLocation>
        <location evidence="5">Nucleus</location>
    </subcellularLocation>
    <text evidence="1">It can interconvert between an inactive cytosolic form and an active membrane-bound form.</text>
</comment>
<comment type="tissue specificity">
    <text evidence="5">Brain, placenta, liver, fetal and adult lung.</text>
</comment>
<comment type="PTM">
    <text evidence="1">The serine residues of the C-terminus are phosphorylated. The inactive soluble form is stabilized by phosphorylation, the active membrane bound form is promoted by anionic lipids or diacylglycerol, and is stabilized by dephosphorylation (By similarity).</text>
</comment>
<comment type="PTM">
    <text evidence="2">Monoubiquitinated by the SCF(FBXL2) complex, leading to proteasomal degradation.</text>
</comment>
<comment type="disease" evidence="7 8">
    <disease id="DI-04061">
        <name>Spondylometaphyseal dysplasia with cone-rod dystrophy</name>
        <acronym>SMDCRD</acronym>
        <description>An autosomal recessive disorder characterized by postnatal growth deficiency resulting in profound short stature, rhizomelia with bowing of the lower extremities, platyspondyly with anterior vertebral protrusions, progressive metaphyseal irregularity and cupping with shortened tubular bones, and early-onset progressive visual impairment associated with a pigmentary maculopathy and electroretinographic evidence of cone-rod dysfunction.</description>
        <dbReference type="MIM" id="608940"/>
    </disease>
    <text>The disease is caused by variants affecting the gene represented in this entry.</text>
</comment>
<comment type="disease" evidence="9">
    <disease id="DI-06827">
        <name>Lipodystrophy, congenital generalized, 5</name>
        <acronym>CGL5</acronym>
        <description>A form of congenital generalized lipodystrophy, a metabolic disorder characterized by a near complete absence of adipose tissue, extreme insulin resistance, hypertriglyceridemia, hepatic steatosis and diabetes mellitus. CGL5 is an autosomal recessive form with onset in early childhood. Affected individuals also have short stature.</description>
        <dbReference type="MIM" id="620680"/>
    </disease>
    <text>The disease is caused by variants affecting the gene represented in this entry.</text>
</comment>
<comment type="similarity">
    <text evidence="13">Belongs to the cytidylyltransferase family.</text>
</comment>
<dbReference type="EC" id="2.7.7.15" evidence="5 10 11"/>
<dbReference type="EMBL" id="L28957">
    <property type="protein sequence ID" value="AAA72127.1"/>
    <property type="molecule type" value="mRNA"/>
</dbReference>
<dbReference type="EMBL" id="EU280320">
    <property type="protein sequence ID" value="ABX44666.1"/>
    <property type="molecule type" value="Genomic_DNA"/>
</dbReference>
<dbReference type="EMBL" id="CH471191">
    <property type="protein sequence ID" value="EAW53655.1"/>
    <property type="molecule type" value="Genomic_DNA"/>
</dbReference>
<dbReference type="EMBL" id="CH471191">
    <property type="protein sequence ID" value="EAW53662.1"/>
    <property type="molecule type" value="Genomic_DNA"/>
</dbReference>
<dbReference type="EMBL" id="BC046355">
    <property type="protein sequence ID" value="AAH46355.1"/>
    <property type="molecule type" value="mRNA"/>
</dbReference>
<dbReference type="CCDS" id="CCDS3315.1"/>
<dbReference type="PIR" id="S50145">
    <property type="entry name" value="S50145"/>
</dbReference>
<dbReference type="RefSeq" id="NP_001299602.1">
    <property type="nucleotide sequence ID" value="NM_001312673.2"/>
</dbReference>
<dbReference type="RefSeq" id="NP_005008.2">
    <property type="nucleotide sequence ID" value="NM_005017.3"/>
</dbReference>
<dbReference type="SMR" id="P49585"/>
<dbReference type="BioGRID" id="111157">
    <property type="interactions" value="78"/>
</dbReference>
<dbReference type="FunCoup" id="P49585">
    <property type="interactions" value="2252"/>
</dbReference>
<dbReference type="IntAct" id="P49585">
    <property type="interactions" value="46"/>
</dbReference>
<dbReference type="MINT" id="P49585"/>
<dbReference type="STRING" id="9606.ENSP00000292823"/>
<dbReference type="ChEMBL" id="CHEMBL4105855"/>
<dbReference type="DrugBank" id="DB00122">
    <property type="generic name" value="Choline"/>
</dbReference>
<dbReference type="DrugBank" id="DB14006">
    <property type="generic name" value="Choline salicylate"/>
</dbReference>
<dbReference type="DrugBank" id="DB00709">
    <property type="generic name" value="Lamivudine"/>
</dbReference>
<dbReference type="DrugCentral" id="P49585"/>
<dbReference type="GlyGen" id="P49585">
    <property type="glycosylation" value="1 site, 1 O-linked glycan (1 site)"/>
</dbReference>
<dbReference type="iPTMnet" id="P49585"/>
<dbReference type="MetOSite" id="P49585"/>
<dbReference type="PhosphoSitePlus" id="P49585"/>
<dbReference type="SwissPalm" id="P49585"/>
<dbReference type="BioMuta" id="PCYT1A"/>
<dbReference type="DMDM" id="166214967"/>
<dbReference type="jPOST" id="P49585"/>
<dbReference type="MassIVE" id="P49585"/>
<dbReference type="PaxDb" id="9606-ENSP00000292823"/>
<dbReference type="PeptideAtlas" id="P49585"/>
<dbReference type="ProteomicsDB" id="56021"/>
<dbReference type="Pumba" id="P49585"/>
<dbReference type="Antibodypedia" id="33936">
    <property type="antibodies" value="238 antibodies from 30 providers"/>
</dbReference>
<dbReference type="DNASU" id="5130"/>
<dbReference type="Ensembl" id="ENST00000292823.6">
    <property type="protein sequence ID" value="ENSP00000292823.2"/>
    <property type="gene ID" value="ENSG00000161217.12"/>
</dbReference>
<dbReference type="Ensembl" id="ENST00000431016.6">
    <property type="protein sequence ID" value="ENSP00000394617.1"/>
    <property type="gene ID" value="ENSG00000161217.12"/>
</dbReference>
<dbReference type="GeneID" id="5130"/>
<dbReference type="KEGG" id="hsa:5130"/>
<dbReference type="MANE-Select" id="ENST00000431016.6">
    <property type="protein sequence ID" value="ENSP00000394617.1"/>
    <property type="RefSeq nucleotide sequence ID" value="NM_001312673.2"/>
    <property type="RefSeq protein sequence ID" value="NP_001299602.1"/>
</dbReference>
<dbReference type="UCSC" id="uc003fwf.2">
    <property type="organism name" value="human"/>
</dbReference>
<dbReference type="AGR" id="HGNC:8754"/>
<dbReference type="CTD" id="5130"/>
<dbReference type="DisGeNET" id="5130"/>
<dbReference type="GeneCards" id="PCYT1A"/>
<dbReference type="HGNC" id="HGNC:8754">
    <property type="gene designation" value="PCYT1A"/>
</dbReference>
<dbReference type="HPA" id="ENSG00000161217">
    <property type="expression patterns" value="Low tissue specificity"/>
</dbReference>
<dbReference type="MalaCards" id="PCYT1A"/>
<dbReference type="MIM" id="123695">
    <property type="type" value="gene"/>
</dbReference>
<dbReference type="MIM" id="608940">
    <property type="type" value="phenotype"/>
</dbReference>
<dbReference type="MIM" id="620680">
    <property type="type" value="phenotype"/>
</dbReference>
<dbReference type="neXtProt" id="NX_P49585"/>
<dbReference type="OpenTargets" id="ENSG00000161217"/>
<dbReference type="Orphanet" id="65">
    <property type="disease" value="Leber congenital amaurosis"/>
</dbReference>
<dbReference type="Orphanet" id="85167">
    <property type="disease" value="Spondylometaphyseal dysplasia-cone-rod dystrophy syndrome"/>
</dbReference>
<dbReference type="PharmGKB" id="PA33099"/>
<dbReference type="VEuPathDB" id="HostDB:ENSG00000161217"/>
<dbReference type="eggNOG" id="KOG2804">
    <property type="taxonomic scope" value="Eukaryota"/>
</dbReference>
<dbReference type="GeneTree" id="ENSGT00940000157384"/>
<dbReference type="HOGENOM" id="CLU_034585_4_2_1"/>
<dbReference type="InParanoid" id="P49585"/>
<dbReference type="OMA" id="IWRESKG"/>
<dbReference type="OrthoDB" id="17102at2759"/>
<dbReference type="PAN-GO" id="P49585">
    <property type="GO annotations" value="3 GO annotations based on evolutionary models"/>
</dbReference>
<dbReference type="PhylomeDB" id="P49585"/>
<dbReference type="TreeFam" id="TF106336"/>
<dbReference type="BioCyc" id="MetaCyc:HS08577-MONOMER"/>
<dbReference type="BRENDA" id="2.7.7.15">
    <property type="organism ID" value="2681"/>
</dbReference>
<dbReference type="PathwayCommons" id="P49585"/>
<dbReference type="Reactome" id="R-HSA-1483191">
    <property type="pathway name" value="Synthesis of PC"/>
</dbReference>
<dbReference type="SignaLink" id="P49585"/>
<dbReference type="SIGNOR" id="P49585"/>
<dbReference type="UniPathway" id="UPA00753">
    <property type="reaction ID" value="UER00739"/>
</dbReference>
<dbReference type="BioGRID-ORCS" id="5130">
    <property type="hits" value="463 hits in 1172 CRISPR screens"/>
</dbReference>
<dbReference type="ChiTaRS" id="PCYT1A">
    <property type="organism name" value="human"/>
</dbReference>
<dbReference type="GeneWiki" id="PCYT1A"/>
<dbReference type="GenomeRNAi" id="5130"/>
<dbReference type="Pharos" id="P49585">
    <property type="development level" value="Tchem"/>
</dbReference>
<dbReference type="PRO" id="PR:P49585"/>
<dbReference type="Proteomes" id="UP000005640">
    <property type="component" value="Chromosome 3"/>
</dbReference>
<dbReference type="RNAct" id="P49585">
    <property type="molecule type" value="protein"/>
</dbReference>
<dbReference type="Bgee" id="ENSG00000161217">
    <property type="expression patterns" value="Expressed in sural nerve and 188 other cell types or tissues"/>
</dbReference>
<dbReference type="ExpressionAtlas" id="P49585">
    <property type="expression patterns" value="baseline and differential"/>
</dbReference>
<dbReference type="GO" id="GO:0005829">
    <property type="term" value="C:cytosol"/>
    <property type="evidence" value="ECO:0007669"/>
    <property type="project" value="UniProtKB-SubCell"/>
</dbReference>
<dbReference type="GO" id="GO:0005783">
    <property type="term" value="C:endoplasmic reticulum"/>
    <property type="evidence" value="ECO:0000314"/>
    <property type="project" value="UniProtKB"/>
</dbReference>
<dbReference type="GO" id="GO:0005789">
    <property type="term" value="C:endoplasmic reticulum membrane"/>
    <property type="evidence" value="ECO:0000314"/>
    <property type="project" value="UniProt"/>
</dbReference>
<dbReference type="GO" id="GO:0042587">
    <property type="term" value="C:glycogen granule"/>
    <property type="evidence" value="ECO:0000250"/>
    <property type="project" value="UniProtKB"/>
</dbReference>
<dbReference type="GO" id="GO:0005635">
    <property type="term" value="C:nuclear envelope"/>
    <property type="evidence" value="ECO:0007669"/>
    <property type="project" value="Ensembl"/>
</dbReference>
<dbReference type="GO" id="GO:0005634">
    <property type="term" value="C:nucleus"/>
    <property type="evidence" value="ECO:0000314"/>
    <property type="project" value="UniProtKB"/>
</dbReference>
<dbReference type="GO" id="GO:0005516">
    <property type="term" value="F:calmodulin binding"/>
    <property type="evidence" value="ECO:0007669"/>
    <property type="project" value="Ensembl"/>
</dbReference>
<dbReference type="GO" id="GO:0004105">
    <property type="term" value="F:choline-phosphate cytidylyltransferase activity"/>
    <property type="evidence" value="ECO:0000314"/>
    <property type="project" value="UniProtKB"/>
</dbReference>
<dbReference type="GO" id="GO:0042802">
    <property type="term" value="F:identical protein binding"/>
    <property type="evidence" value="ECO:0000353"/>
    <property type="project" value="IntAct"/>
</dbReference>
<dbReference type="GO" id="GO:0140678">
    <property type="term" value="F:molecular function inhibitor activity"/>
    <property type="evidence" value="ECO:0007669"/>
    <property type="project" value="Ensembl"/>
</dbReference>
<dbReference type="GO" id="GO:0031210">
    <property type="term" value="F:phosphatidylcholine binding"/>
    <property type="evidence" value="ECO:0000318"/>
    <property type="project" value="GO_Central"/>
</dbReference>
<dbReference type="GO" id="GO:0042803">
    <property type="term" value="F:protein homodimerization activity"/>
    <property type="evidence" value="ECO:0007669"/>
    <property type="project" value="Ensembl"/>
</dbReference>
<dbReference type="GO" id="GO:0042100">
    <property type="term" value="P:B cell proliferation"/>
    <property type="evidence" value="ECO:0000250"/>
    <property type="project" value="UniProtKB"/>
</dbReference>
<dbReference type="GO" id="GO:0006657">
    <property type="term" value="P:CDP-choline pathway"/>
    <property type="evidence" value="ECO:0000314"/>
    <property type="project" value="UniProtKB"/>
</dbReference>
<dbReference type="GO" id="GO:0045190">
    <property type="term" value="P:isotype switching"/>
    <property type="evidence" value="ECO:0000250"/>
    <property type="project" value="UniProtKB"/>
</dbReference>
<dbReference type="GO" id="GO:0006656">
    <property type="term" value="P:phosphatidylcholine biosynthetic process"/>
    <property type="evidence" value="ECO:0000314"/>
    <property type="project" value="UniProtKB"/>
</dbReference>
<dbReference type="CDD" id="cd02174">
    <property type="entry name" value="CCT"/>
    <property type="match status" value="1"/>
</dbReference>
<dbReference type="FunFam" id="3.40.50.620:FF:000016">
    <property type="entry name" value="Putative choline-phosphate cytidylyltransferase B"/>
    <property type="match status" value="1"/>
</dbReference>
<dbReference type="Gene3D" id="3.40.50.620">
    <property type="entry name" value="HUPs"/>
    <property type="match status" value="1"/>
</dbReference>
<dbReference type="InterPro" id="IPR041723">
    <property type="entry name" value="CCT"/>
</dbReference>
<dbReference type="InterPro" id="IPR004821">
    <property type="entry name" value="Cyt_trans-like"/>
</dbReference>
<dbReference type="InterPro" id="IPR045049">
    <property type="entry name" value="Pcy1-like"/>
</dbReference>
<dbReference type="InterPro" id="IPR014729">
    <property type="entry name" value="Rossmann-like_a/b/a_fold"/>
</dbReference>
<dbReference type="NCBIfam" id="TIGR00125">
    <property type="entry name" value="cyt_tran_rel"/>
    <property type="match status" value="1"/>
</dbReference>
<dbReference type="PANTHER" id="PTHR10739:SF19">
    <property type="entry name" value="CHOLINE-PHOSPHATE CYTIDYLYLTRANSFERASE A"/>
    <property type="match status" value="1"/>
</dbReference>
<dbReference type="PANTHER" id="PTHR10739">
    <property type="entry name" value="CYTIDYLYLTRANSFERASE"/>
    <property type="match status" value="1"/>
</dbReference>
<dbReference type="Pfam" id="PF01467">
    <property type="entry name" value="CTP_transf_like"/>
    <property type="match status" value="1"/>
</dbReference>
<dbReference type="SUPFAM" id="SSF52374">
    <property type="entry name" value="Nucleotidylyl transferase"/>
    <property type="match status" value="1"/>
</dbReference>
<proteinExistence type="evidence at protein level"/>
<reference key="1">
    <citation type="journal article" date="1994" name="Biochim. Biophys. Acta">
        <title>Primary structure and expression of a human CTP:phosphocholine cytidylyltransferase.</title>
        <authorList>
            <person name="Kalmar G.B."/>
            <person name="Kay R.J."/>
            <person name="Lachance A.C."/>
            <person name="Cornell R.B."/>
        </authorList>
    </citation>
    <scope>NUCLEOTIDE SEQUENCE [MRNA]</scope>
    <scope>FUNCTION</scope>
    <scope>CATALYTIC ACTIVITY</scope>
    <scope>ACTIVITY REGULATION</scope>
</reference>
<reference key="2">
    <citation type="submission" date="2007-11" db="EMBL/GenBank/DDBJ databases">
        <authorList>
            <consortium name="SeattleSNPs variation discovery resource"/>
        </authorList>
    </citation>
    <scope>NUCLEOTIDE SEQUENCE [GENOMIC DNA]</scope>
</reference>
<reference key="3">
    <citation type="submission" date="2005-09" db="EMBL/GenBank/DDBJ databases">
        <authorList>
            <person name="Mural R.J."/>
            <person name="Istrail S."/>
            <person name="Sutton G.G."/>
            <person name="Florea L."/>
            <person name="Halpern A.L."/>
            <person name="Mobarry C.M."/>
            <person name="Lippert R."/>
            <person name="Walenz B."/>
            <person name="Shatkay H."/>
            <person name="Dew I."/>
            <person name="Miller J.R."/>
            <person name="Flanigan M.J."/>
            <person name="Edwards N.J."/>
            <person name="Bolanos R."/>
            <person name="Fasulo D."/>
            <person name="Halldorsson B.V."/>
            <person name="Hannenhalli S."/>
            <person name="Turner R."/>
            <person name="Yooseph S."/>
            <person name="Lu F."/>
            <person name="Nusskern D.R."/>
            <person name="Shue B.C."/>
            <person name="Zheng X.H."/>
            <person name="Zhong F."/>
            <person name="Delcher A.L."/>
            <person name="Huson D.H."/>
            <person name="Kravitz S.A."/>
            <person name="Mouchard L."/>
            <person name="Reinert K."/>
            <person name="Remington K.A."/>
            <person name="Clark A.G."/>
            <person name="Waterman M.S."/>
            <person name="Eichler E.E."/>
            <person name="Adams M.D."/>
            <person name="Hunkapiller M.W."/>
            <person name="Myers E.W."/>
            <person name="Venter J.C."/>
        </authorList>
    </citation>
    <scope>NUCLEOTIDE SEQUENCE [LARGE SCALE GENOMIC DNA]</scope>
</reference>
<reference key="4">
    <citation type="journal article" date="2004" name="Genome Res.">
        <title>The status, quality, and expansion of the NIH full-length cDNA project: the Mammalian Gene Collection (MGC).</title>
        <authorList>
            <consortium name="The MGC Project Team"/>
        </authorList>
    </citation>
    <scope>NUCLEOTIDE SEQUENCE [LARGE SCALE MRNA]</scope>
    <source>
        <tissue>Brain</tissue>
    </source>
</reference>
<reference key="5">
    <citation type="journal article" date="1994" name="Biochemistry">
        <title>Membrane-binding amphipathic alpha-helical peptide derived from CTP:phosphocholine cytidylyltransferase.</title>
        <authorList>
            <person name="Johnson J.E."/>
            <person name="Cornell R.B."/>
        </authorList>
    </citation>
    <scope>CIRCULAR DICHROISM</scope>
    <scope>ACTIVITY REGULATION</scope>
    <scope>REGION</scope>
</reference>
<reference key="6">
    <citation type="journal article" date="1996" name="Biochemistry">
        <title>Structure of the membrane binding domain of CTP:phosphocholine cytidylyltransferase.</title>
        <authorList>
            <person name="Dunne S.J."/>
            <person name="Cornell R.B."/>
            <person name="Johnson J.E."/>
            <person name="Glover N.R."/>
            <person name="Tracey A.S."/>
        </authorList>
    </citation>
    <scope>CIRCULAR DICHROISM</scope>
    <scope>STRUCTURE BY NMR OF 236-268 AND 267-288</scope>
</reference>
<reference key="7">
    <citation type="journal article" date="1999" name="J. Biol. Chem.">
        <title>Distribution of CTP:phosphocholine cytidylyltransferase (CCT) isoforms. Identification of a new CCTbeta splice variant.</title>
        <authorList>
            <person name="Lykidis A."/>
            <person name="Baburina I."/>
            <person name="Jackowski S."/>
        </authorList>
    </citation>
    <scope>FUNCTION</scope>
    <scope>CATALYTIC ACTIVITY</scope>
    <scope>SUBCELLULAR LOCATION</scope>
    <scope>TISSUE SPECIFICITY</scope>
</reference>
<reference key="8">
    <citation type="journal article" date="2004" name="J. Biol. Chem.">
        <title>Membrane binding modulates the quaternary structure of CTP:phosphocholine cytidylyltransferase.</title>
        <authorList>
            <person name="Xie M."/>
            <person name="Smith J.L."/>
            <person name="Ding Z."/>
            <person name="Zhang D."/>
            <person name="Cornell R.B."/>
        </authorList>
    </citation>
    <scope>IN VITRO INTERCHAIN DISULFIDE BOND</scope>
    <scope>MUTAGENESIS OF CYS-37</scope>
</reference>
<reference key="9">
    <citation type="journal article" date="2006" name="Cell">
        <title>Global, in vivo, and site-specific phosphorylation dynamics in signaling networks.</title>
        <authorList>
            <person name="Olsen J.V."/>
            <person name="Blagoev B."/>
            <person name="Gnad F."/>
            <person name="Macek B."/>
            <person name="Kumar C."/>
            <person name="Mortensen P."/>
            <person name="Mann M."/>
        </authorList>
    </citation>
    <scope>PHOSPHORYLATION [LARGE SCALE ANALYSIS] AT SER-362</scope>
    <scope>IDENTIFICATION BY MASS SPECTROMETRY [LARGE SCALE ANALYSIS]</scope>
    <source>
        <tissue>Cervix carcinoma</tissue>
    </source>
</reference>
<reference key="10">
    <citation type="journal article" date="2006" name="Nat. Biotechnol.">
        <title>A probability-based approach for high-throughput protein phosphorylation analysis and site localization.</title>
        <authorList>
            <person name="Beausoleil S.A."/>
            <person name="Villen J."/>
            <person name="Gerber S.A."/>
            <person name="Rush J."/>
            <person name="Gygi S.P."/>
        </authorList>
    </citation>
    <scope>PHOSPHORYLATION [LARGE SCALE ANALYSIS] AT SER-362</scope>
    <scope>IDENTIFICATION BY MASS SPECTROMETRY [LARGE SCALE ANALYSIS]</scope>
    <source>
        <tissue>Cervix carcinoma</tissue>
    </source>
</reference>
<reference key="11">
    <citation type="journal article" date="2008" name="Proc. Natl. Acad. Sci. U.S.A.">
        <title>A quantitative atlas of mitotic phosphorylation.</title>
        <authorList>
            <person name="Dephoure N."/>
            <person name="Zhou C."/>
            <person name="Villen J."/>
            <person name="Beausoleil S.A."/>
            <person name="Bakalarski C.E."/>
            <person name="Elledge S.J."/>
            <person name="Gygi S.P."/>
        </authorList>
    </citation>
    <scope>PHOSPHORYLATION [LARGE SCALE ANALYSIS] AT SER-343; SER-347; SER-352 AND SER-362</scope>
    <scope>IDENTIFICATION BY MASS SPECTROMETRY [LARGE SCALE ANALYSIS]</scope>
    <source>
        <tissue>Cervix carcinoma</tissue>
    </source>
</reference>
<reference key="12">
    <citation type="journal article" date="2009" name="Anal. Chem.">
        <title>Lys-N and trypsin cover complementary parts of the phosphoproteome in a refined SCX-based approach.</title>
        <authorList>
            <person name="Gauci S."/>
            <person name="Helbig A.O."/>
            <person name="Slijper M."/>
            <person name="Krijgsveld J."/>
            <person name="Heck A.J."/>
            <person name="Mohammed S."/>
        </authorList>
    </citation>
    <scope>IDENTIFICATION BY MASS SPECTROMETRY [LARGE SCALE ANALYSIS]</scope>
</reference>
<reference key="13">
    <citation type="journal article" date="2009" name="Sci. Signal.">
        <title>Quantitative phosphoproteomic analysis of T cell receptor signaling reveals system-wide modulation of protein-protein interactions.</title>
        <authorList>
            <person name="Mayya V."/>
            <person name="Lundgren D.H."/>
            <person name="Hwang S.-I."/>
            <person name="Rezaul K."/>
            <person name="Wu L."/>
            <person name="Eng J.K."/>
            <person name="Rodionov V."/>
            <person name="Han D.K."/>
        </authorList>
    </citation>
    <scope>PHOSPHORYLATION [LARGE SCALE ANALYSIS] AT SER-315; SER-319; SER-343; SER-347 AND SER-362</scope>
    <scope>IDENTIFICATION BY MASS SPECTROMETRY [LARGE SCALE ANALYSIS]</scope>
    <source>
        <tissue>Leukemic T-cell</tissue>
    </source>
</reference>
<reference key="14">
    <citation type="journal article" date="2009" name="Science">
        <title>Lysine acetylation targets protein complexes and co-regulates major cellular functions.</title>
        <authorList>
            <person name="Choudhary C."/>
            <person name="Kumar C."/>
            <person name="Gnad F."/>
            <person name="Nielsen M.L."/>
            <person name="Rehman M."/>
            <person name="Walther T.C."/>
            <person name="Olsen J.V."/>
            <person name="Mann M."/>
        </authorList>
    </citation>
    <scope>ACETYLATION [LARGE SCALE ANALYSIS] AT LYS-8</scope>
    <scope>IDENTIFICATION BY MASS SPECTROMETRY [LARGE SCALE ANALYSIS]</scope>
</reference>
<reference key="15">
    <citation type="journal article" date="2010" name="Sci. Signal.">
        <title>Quantitative phosphoproteomics reveals widespread full phosphorylation site occupancy during mitosis.</title>
        <authorList>
            <person name="Olsen J.V."/>
            <person name="Vermeulen M."/>
            <person name="Santamaria A."/>
            <person name="Kumar C."/>
            <person name="Miller M.L."/>
            <person name="Jensen L.J."/>
            <person name="Gnad F."/>
            <person name="Cox J."/>
            <person name="Jensen T.S."/>
            <person name="Nigg E.A."/>
            <person name="Brunak S."/>
            <person name="Mann M."/>
        </authorList>
    </citation>
    <scope>PHOSPHORYLATION [LARGE SCALE ANALYSIS] AT SER-362</scope>
    <scope>IDENTIFICATION BY MASS SPECTROMETRY [LARGE SCALE ANALYSIS]</scope>
    <source>
        <tissue>Cervix carcinoma</tissue>
    </source>
</reference>
<reference key="16">
    <citation type="journal article" date="2011" name="BMC Syst. Biol.">
        <title>Initial characterization of the human central proteome.</title>
        <authorList>
            <person name="Burkard T.R."/>
            <person name="Planyavsky M."/>
            <person name="Kaupe I."/>
            <person name="Breitwieser F.P."/>
            <person name="Buerckstuemmer T."/>
            <person name="Bennett K.L."/>
            <person name="Superti-Furga G."/>
            <person name="Colinge J."/>
        </authorList>
    </citation>
    <scope>IDENTIFICATION BY MASS SPECTROMETRY [LARGE SCALE ANALYSIS]</scope>
</reference>
<reference key="17">
    <citation type="journal article" date="2011" name="Sci. Signal.">
        <title>System-wide temporal characterization of the proteome and phosphoproteome of human embryonic stem cell differentiation.</title>
        <authorList>
            <person name="Rigbolt K.T."/>
            <person name="Prokhorova T.A."/>
            <person name="Akimov V."/>
            <person name="Henningsen J."/>
            <person name="Johansen P.T."/>
            <person name="Kratchmarova I."/>
            <person name="Kassem M."/>
            <person name="Mann M."/>
            <person name="Olsen J.V."/>
            <person name="Blagoev B."/>
        </authorList>
    </citation>
    <scope>PHOSPHORYLATION [LARGE SCALE ANALYSIS] AT SER-362</scope>
    <scope>IDENTIFICATION BY MASS SPECTROMETRY [LARGE SCALE ANALYSIS]</scope>
</reference>
<reference key="18">
    <citation type="journal article" date="2012" name="Proc. Natl. Acad. Sci. U.S.A.">
        <title>N-terminal acetylome analyses and functional insights of the N-terminal acetyltransferase NatB.</title>
        <authorList>
            <person name="Van Damme P."/>
            <person name="Lasa M."/>
            <person name="Polevoda B."/>
            <person name="Gazquez C."/>
            <person name="Elosegui-Artola A."/>
            <person name="Kim D.S."/>
            <person name="De Juan-Pardo E."/>
            <person name="Demeyer K."/>
            <person name="Hole K."/>
            <person name="Larrea E."/>
            <person name="Timmerman E."/>
            <person name="Prieto J."/>
            <person name="Arnesen T."/>
            <person name="Sherman F."/>
            <person name="Gevaert K."/>
            <person name="Aldabe R."/>
        </authorList>
    </citation>
    <scope>ACETYLATION [LARGE SCALE ANALYSIS] AT MET-1</scope>
    <scope>IDENTIFICATION BY MASS SPECTROMETRY [LARGE SCALE ANALYSIS]</scope>
</reference>
<reference key="19">
    <citation type="journal article" date="2013" name="J. Proteome Res.">
        <title>Toward a comprehensive characterization of a human cancer cell phosphoproteome.</title>
        <authorList>
            <person name="Zhou H."/>
            <person name="Di Palma S."/>
            <person name="Preisinger C."/>
            <person name="Peng M."/>
            <person name="Polat A.N."/>
            <person name="Heck A.J."/>
            <person name="Mohammed S."/>
        </authorList>
    </citation>
    <scope>PHOSPHORYLATION [LARGE SCALE ANALYSIS] AT SER-233; SER-315; SER-319; SER-331; THR-342; SER-343 AND SER-347</scope>
    <scope>IDENTIFICATION BY MASS SPECTROMETRY [LARGE SCALE ANALYSIS]</scope>
    <source>
        <tissue>Cervix carcinoma</tissue>
        <tissue>Erythroleukemia</tissue>
    </source>
</reference>
<reference key="20">
    <citation type="journal article" date="2014" name="J. Proteomics">
        <title>An enzyme assisted RP-RPLC approach for in-depth analysis of human liver phosphoproteome.</title>
        <authorList>
            <person name="Bian Y."/>
            <person name="Song C."/>
            <person name="Cheng K."/>
            <person name="Dong M."/>
            <person name="Wang F."/>
            <person name="Huang J."/>
            <person name="Sun D."/>
            <person name="Wang L."/>
            <person name="Ye M."/>
            <person name="Zou H."/>
        </authorList>
    </citation>
    <scope>PHOSPHORYLATION [LARGE SCALE ANALYSIS] AT SER-343; SER-347 AND SER-362</scope>
    <scope>IDENTIFICATION BY MASS SPECTROMETRY [LARGE SCALE ANALYSIS]</scope>
    <source>
        <tissue>Liver</tissue>
    </source>
</reference>
<reference key="21">
    <citation type="journal article" date="2014" name="Am. J. Hum. Genet.">
        <title>Mutations in PCYT1A, encoding a key regulator of phosphatidylcholine metabolism, cause spondylometaphyseal dysplasia with cone-rod dystrophy.</title>
        <authorList>
            <person name="Hoover-Fong J."/>
            <person name="Sobreira N."/>
            <person name="Jurgens J."/>
            <person name="Modaff P."/>
            <person name="Blout C."/>
            <person name="Moser A."/>
            <person name="Kim O.H."/>
            <person name="Cho T.J."/>
            <person name="Cho S.Y."/>
            <person name="Kim S.J."/>
            <person name="Jin D.K."/>
            <person name="Kitoh H."/>
            <person name="Park W.Y."/>
            <person name="Ling H."/>
            <person name="Hetrick K.N."/>
            <person name="Doheny K.F."/>
            <person name="Valle D."/>
            <person name="Pauli R.M."/>
        </authorList>
    </citation>
    <scope>VARIANTS SMDCRD THR-99; VAL-99; LYS-129; ALA-150; LEU-191 AND SER-223</scope>
</reference>
<reference key="22">
    <citation type="journal article" date="2014" name="Am. J. Hum. Genet.">
        <title>Mutations in PCYT1A cause spondylometaphyseal dysplasia with cone-rod dystrophy.</title>
        <authorList>
            <person name="Yamamoto G.L."/>
            <person name="Baratela W.A."/>
            <person name="Almeida T.F."/>
            <person name="Lazar M."/>
            <person name="Afonso C.L."/>
            <person name="Oyamada M.K."/>
            <person name="Suzuki L."/>
            <person name="Oliveira L.A."/>
            <person name="Ramos E.S."/>
            <person name="Kim C.A."/>
            <person name="Passos-Bueno M.R."/>
            <person name="Bertola D.R."/>
        </authorList>
    </citation>
    <scope>VARIANT SMDCRD LYS-129</scope>
</reference>
<reference key="23">
    <citation type="journal article" date="2014" name="Proc. Natl. Acad. Sci. U.S.A.">
        <title>Mutations disrupting the Kennedy phosphatidylcholine pathway in humans with congenital lipodystrophy and fatty liver disease.</title>
        <authorList>
            <person name="Payne F."/>
            <person name="Lim K."/>
            <person name="Girousse A."/>
            <person name="Brown R.J."/>
            <person name="Kory N."/>
            <person name="Robbins A."/>
            <person name="Xue Y."/>
            <person name="Sleigh A."/>
            <person name="Cochran E."/>
            <person name="Adams C."/>
            <person name="Dev Borman A."/>
            <person name="Russel-Jones D."/>
            <person name="Gorden P."/>
            <person name="Semple R.K."/>
            <person name="Saudek V."/>
            <person name="O'Rahilly S."/>
            <person name="Walther T.C."/>
            <person name="Barroso I."/>
            <person name="Savage D.B."/>
        </authorList>
    </citation>
    <scope>VARIANTS CGL5 MET-142 AND GLU-280 DEL</scope>
    <scope>CHARACTERIZATION OF VARIANT CGL5 GLU-280 DEL</scope>
    <scope>INVOLVEMENT IN CGL5</scope>
</reference>
<reference key="24">
    <citation type="journal article" date="2019" name="J. Biol. Chem.">
        <title>Disease-linked mutations in the phosphatidylcholine regulatory enzyme CCTalpha impair enzymatic activity and fold stability.</title>
        <authorList>
            <person name="Cornell R.B."/>
            <person name="Taneva S.G."/>
            <person name="Dennis M.K."/>
            <person name="Tse R."/>
            <person name="Dhillon R.K."/>
            <person name="Lee J."/>
        </authorList>
    </citation>
    <scope>CHARACTERIZATION OF VARIANTS VAL-99; THR-99; LYS-129; MET-142; ALA-150; LEU-191; SER-223 AND GLU-280 DEL</scope>
    <scope>MUTAGENESIS OF ALA-93 AND TYR-240</scope>
    <scope>FUNCTION</scope>
    <scope>CATALYTIC ACTIVITY</scope>
</reference>
<name>PCY1A_HUMAN</name>
<organism>
    <name type="scientific">Homo sapiens</name>
    <name type="common">Human</name>
    <dbReference type="NCBI Taxonomy" id="9606"/>
    <lineage>
        <taxon>Eukaryota</taxon>
        <taxon>Metazoa</taxon>
        <taxon>Chordata</taxon>
        <taxon>Craniata</taxon>
        <taxon>Vertebrata</taxon>
        <taxon>Euteleostomi</taxon>
        <taxon>Mammalia</taxon>
        <taxon>Eutheria</taxon>
        <taxon>Euarchontoglires</taxon>
        <taxon>Primates</taxon>
        <taxon>Haplorrhini</taxon>
        <taxon>Catarrhini</taxon>
        <taxon>Hominidae</taxon>
        <taxon>Homo</taxon>
    </lineage>
</organism>